<keyword id="KW-0028">Amino-acid biosynthesis</keyword>
<keyword id="KW-0055">Arginine biosynthesis</keyword>
<keyword id="KW-0963">Cytoplasm</keyword>
<keyword id="KW-0456">Lyase</keyword>
<sequence length="470" mass="49699">MSTNEGSLWGGRFADGPADALAALSKSTHFDWVLAPYDIAASKAHARVLFSAGLLTEDQRDGLLAGLDSLASDVADGSFAPLVTDEDVHGALERGLIDRVGAELGGRLRAGRSRNDQVATLFRAWLRDAIRRVADGVLGVVSALATQAAAHPTAIMPGKTHLQSAQPVLLAHHLLAHAHPLLRDVERLADFDKRAAVSPYGAGALAGSSLGLDPDAIAAELGFDSAADNSIDATAARDFAAEAAFVLAMIGVDLSRLAEDIILWSTTEFGYVTLHDAWSTGSSIMPQKKNPDIAELARGKSGRLIGNLTGLLATLKAQPLAYNRDLQEDKEPVFDSVAQLELLLPAVAGLVSTLRFDVDRMAELAPLGYTLATDVAEWLVRRGVPFRVAHEAAGAAVRAAEARGVGLEDLEDAELTGIHPELTGDVREVLTVEGSVNSRDARGGTAPVQVAKQLNVVRDTADRLRLALRR</sequence>
<proteinExistence type="inferred from homology"/>
<reference key="1">
    <citation type="submission" date="2007-02" db="EMBL/GenBank/DDBJ databases">
        <title>Complete sequence of Mycobacterium sp. JLS.</title>
        <authorList>
            <consortium name="US DOE Joint Genome Institute"/>
            <person name="Copeland A."/>
            <person name="Lucas S."/>
            <person name="Lapidus A."/>
            <person name="Barry K."/>
            <person name="Detter J.C."/>
            <person name="Glavina del Rio T."/>
            <person name="Hammon N."/>
            <person name="Israni S."/>
            <person name="Dalin E."/>
            <person name="Tice H."/>
            <person name="Pitluck S."/>
            <person name="Chain P."/>
            <person name="Malfatti S."/>
            <person name="Shin M."/>
            <person name="Vergez L."/>
            <person name="Schmutz J."/>
            <person name="Larimer F."/>
            <person name="Land M."/>
            <person name="Hauser L."/>
            <person name="Kyrpides N."/>
            <person name="Mikhailova N."/>
            <person name="Miller C.D."/>
            <person name="Anderson A.J."/>
            <person name="Sims R.C."/>
            <person name="Richardson P."/>
        </authorList>
    </citation>
    <scope>NUCLEOTIDE SEQUENCE [LARGE SCALE GENOMIC DNA]</scope>
    <source>
        <strain>JLS</strain>
    </source>
</reference>
<protein>
    <recommendedName>
        <fullName evidence="1">Argininosuccinate lyase</fullName>
        <shortName evidence="1">ASAL</shortName>
        <ecNumber evidence="1">4.3.2.1</ecNumber>
    </recommendedName>
    <alternativeName>
        <fullName evidence="1">Arginosuccinase</fullName>
    </alternativeName>
</protein>
<organism>
    <name type="scientific">Mycobacterium sp. (strain JLS)</name>
    <dbReference type="NCBI Taxonomy" id="164757"/>
    <lineage>
        <taxon>Bacteria</taxon>
        <taxon>Bacillati</taxon>
        <taxon>Actinomycetota</taxon>
        <taxon>Actinomycetes</taxon>
        <taxon>Mycobacteriales</taxon>
        <taxon>Mycobacteriaceae</taxon>
        <taxon>Mycobacterium</taxon>
    </lineage>
</organism>
<evidence type="ECO:0000255" key="1">
    <source>
        <dbReference type="HAMAP-Rule" id="MF_00006"/>
    </source>
</evidence>
<name>ARLY_MYCSJ</name>
<comment type="catalytic activity">
    <reaction evidence="1">
        <text>2-(N(omega)-L-arginino)succinate = fumarate + L-arginine</text>
        <dbReference type="Rhea" id="RHEA:24020"/>
        <dbReference type="ChEBI" id="CHEBI:29806"/>
        <dbReference type="ChEBI" id="CHEBI:32682"/>
        <dbReference type="ChEBI" id="CHEBI:57472"/>
        <dbReference type="EC" id="4.3.2.1"/>
    </reaction>
</comment>
<comment type="pathway">
    <text evidence="1">Amino-acid biosynthesis; L-arginine biosynthesis; L-arginine from L-ornithine and carbamoyl phosphate: step 3/3.</text>
</comment>
<comment type="subcellular location">
    <subcellularLocation>
        <location evidence="1">Cytoplasm</location>
    </subcellularLocation>
</comment>
<comment type="similarity">
    <text evidence="1">Belongs to the lyase 1 family. Argininosuccinate lyase subfamily.</text>
</comment>
<dbReference type="EC" id="4.3.2.1" evidence="1"/>
<dbReference type="EMBL" id="CP000580">
    <property type="protein sequence ID" value="ABN98759.1"/>
    <property type="molecule type" value="Genomic_DNA"/>
</dbReference>
<dbReference type="SMR" id="A3Q0T2"/>
<dbReference type="KEGG" id="mjl:Mjls_2980"/>
<dbReference type="HOGENOM" id="CLU_027272_2_2_11"/>
<dbReference type="BioCyc" id="MSP164757:G1G8C-3003-MONOMER"/>
<dbReference type="UniPathway" id="UPA00068">
    <property type="reaction ID" value="UER00114"/>
</dbReference>
<dbReference type="GO" id="GO:0005829">
    <property type="term" value="C:cytosol"/>
    <property type="evidence" value="ECO:0007669"/>
    <property type="project" value="TreeGrafter"/>
</dbReference>
<dbReference type="GO" id="GO:0004056">
    <property type="term" value="F:argininosuccinate lyase activity"/>
    <property type="evidence" value="ECO:0007669"/>
    <property type="project" value="UniProtKB-UniRule"/>
</dbReference>
<dbReference type="GO" id="GO:0042450">
    <property type="term" value="P:arginine biosynthetic process via ornithine"/>
    <property type="evidence" value="ECO:0007669"/>
    <property type="project" value="InterPro"/>
</dbReference>
<dbReference type="GO" id="GO:0006526">
    <property type="term" value="P:L-arginine biosynthetic process"/>
    <property type="evidence" value="ECO:0007669"/>
    <property type="project" value="UniProtKB-UniRule"/>
</dbReference>
<dbReference type="CDD" id="cd01359">
    <property type="entry name" value="Argininosuccinate_lyase"/>
    <property type="match status" value="1"/>
</dbReference>
<dbReference type="FunFam" id="1.10.40.30:FF:000001">
    <property type="entry name" value="Argininosuccinate lyase"/>
    <property type="match status" value="1"/>
</dbReference>
<dbReference type="FunFam" id="1.20.200.10:FF:000015">
    <property type="entry name" value="argininosuccinate lyase isoform X2"/>
    <property type="match status" value="1"/>
</dbReference>
<dbReference type="Gene3D" id="1.10.40.30">
    <property type="entry name" value="Fumarase/aspartase (C-terminal domain)"/>
    <property type="match status" value="1"/>
</dbReference>
<dbReference type="Gene3D" id="1.20.200.10">
    <property type="entry name" value="Fumarase/aspartase (Central domain)"/>
    <property type="match status" value="1"/>
</dbReference>
<dbReference type="Gene3D" id="1.10.275.10">
    <property type="entry name" value="Fumarase/aspartase (N-terminal domain)"/>
    <property type="match status" value="1"/>
</dbReference>
<dbReference type="HAMAP" id="MF_00006">
    <property type="entry name" value="Arg_succ_lyase"/>
    <property type="match status" value="1"/>
</dbReference>
<dbReference type="InterPro" id="IPR029419">
    <property type="entry name" value="Arg_succ_lyase_C"/>
</dbReference>
<dbReference type="InterPro" id="IPR009049">
    <property type="entry name" value="Argininosuccinate_lyase"/>
</dbReference>
<dbReference type="InterPro" id="IPR024083">
    <property type="entry name" value="Fumarase/histidase_N"/>
</dbReference>
<dbReference type="InterPro" id="IPR020557">
    <property type="entry name" value="Fumarate_lyase_CS"/>
</dbReference>
<dbReference type="InterPro" id="IPR000362">
    <property type="entry name" value="Fumarate_lyase_fam"/>
</dbReference>
<dbReference type="InterPro" id="IPR022761">
    <property type="entry name" value="Fumarate_lyase_N"/>
</dbReference>
<dbReference type="InterPro" id="IPR008948">
    <property type="entry name" value="L-Aspartase-like"/>
</dbReference>
<dbReference type="NCBIfam" id="TIGR00838">
    <property type="entry name" value="argH"/>
    <property type="match status" value="1"/>
</dbReference>
<dbReference type="PANTHER" id="PTHR43814">
    <property type="entry name" value="ARGININOSUCCINATE LYASE"/>
    <property type="match status" value="1"/>
</dbReference>
<dbReference type="PANTHER" id="PTHR43814:SF1">
    <property type="entry name" value="ARGININOSUCCINATE LYASE"/>
    <property type="match status" value="1"/>
</dbReference>
<dbReference type="Pfam" id="PF14698">
    <property type="entry name" value="ASL_C2"/>
    <property type="match status" value="1"/>
</dbReference>
<dbReference type="Pfam" id="PF00206">
    <property type="entry name" value="Lyase_1"/>
    <property type="match status" value="1"/>
</dbReference>
<dbReference type="PRINTS" id="PR00145">
    <property type="entry name" value="ARGSUCLYASE"/>
</dbReference>
<dbReference type="PRINTS" id="PR00149">
    <property type="entry name" value="FUMRATELYASE"/>
</dbReference>
<dbReference type="SUPFAM" id="SSF48557">
    <property type="entry name" value="L-aspartase-like"/>
    <property type="match status" value="1"/>
</dbReference>
<dbReference type="PROSITE" id="PS00163">
    <property type="entry name" value="FUMARATE_LYASES"/>
    <property type="match status" value="1"/>
</dbReference>
<gene>
    <name evidence="1" type="primary">argH</name>
    <name type="ordered locus">Mjls_2980</name>
</gene>
<feature type="chain" id="PRO_1000000507" description="Argininosuccinate lyase">
    <location>
        <begin position="1"/>
        <end position="470"/>
    </location>
</feature>
<accession>A3Q0T2</accession>